<protein>
    <recommendedName>
        <fullName evidence="1">Large ribosomal subunit protein uL15</fullName>
    </recommendedName>
    <alternativeName>
        <fullName evidence="3">50S ribosomal protein L15</fullName>
    </alternativeName>
</protein>
<name>RL15_PSELT</name>
<organism>
    <name type="scientific">Pseudothermotoga lettingae (strain ATCC BAA-301 / DSM 14385 / NBRC 107922 / TMO)</name>
    <name type="common">Thermotoga lettingae</name>
    <dbReference type="NCBI Taxonomy" id="416591"/>
    <lineage>
        <taxon>Bacteria</taxon>
        <taxon>Thermotogati</taxon>
        <taxon>Thermotogota</taxon>
        <taxon>Thermotogae</taxon>
        <taxon>Thermotogales</taxon>
        <taxon>Thermotogaceae</taxon>
        <taxon>Pseudothermotoga</taxon>
    </lineage>
</organism>
<accession>A8F4T0</accession>
<feature type="chain" id="PRO_1000073320" description="Large ribosomal subunit protein uL15">
    <location>
        <begin position="1"/>
        <end position="148"/>
    </location>
</feature>
<feature type="region of interest" description="Disordered" evidence="2">
    <location>
        <begin position="1"/>
        <end position="47"/>
    </location>
</feature>
<feature type="compositionally biased region" description="Basic residues" evidence="2">
    <location>
        <begin position="31"/>
        <end position="45"/>
    </location>
</feature>
<keyword id="KW-1185">Reference proteome</keyword>
<keyword id="KW-0687">Ribonucleoprotein</keyword>
<keyword id="KW-0689">Ribosomal protein</keyword>
<keyword id="KW-0694">RNA-binding</keyword>
<keyword id="KW-0699">rRNA-binding</keyword>
<gene>
    <name evidence="1" type="primary">rplO</name>
    <name type="ordered locus">Tlet_0598</name>
</gene>
<proteinExistence type="inferred from homology"/>
<dbReference type="EMBL" id="CP000812">
    <property type="protein sequence ID" value="ABV33164.1"/>
    <property type="molecule type" value="Genomic_DNA"/>
</dbReference>
<dbReference type="RefSeq" id="WP_012002645.1">
    <property type="nucleotide sequence ID" value="NZ_BSDV01000001.1"/>
</dbReference>
<dbReference type="SMR" id="A8F4T0"/>
<dbReference type="STRING" id="416591.Tlet_0598"/>
<dbReference type="KEGG" id="tle:Tlet_0598"/>
<dbReference type="eggNOG" id="COG0200">
    <property type="taxonomic scope" value="Bacteria"/>
</dbReference>
<dbReference type="HOGENOM" id="CLU_055188_4_2_0"/>
<dbReference type="OrthoDB" id="9810293at2"/>
<dbReference type="Proteomes" id="UP000002016">
    <property type="component" value="Chromosome"/>
</dbReference>
<dbReference type="GO" id="GO:0022625">
    <property type="term" value="C:cytosolic large ribosomal subunit"/>
    <property type="evidence" value="ECO:0007669"/>
    <property type="project" value="TreeGrafter"/>
</dbReference>
<dbReference type="GO" id="GO:0019843">
    <property type="term" value="F:rRNA binding"/>
    <property type="evidence" value="ECO:0007669"/>
    <property type="project" value="UniProtKB-UniRule"/>
</dbReference>
<dbReference type="GO" id="GO:0003735">
    <property type="term" value="F:structural constituent of ribosome"/>
    <property type="evidence" value="ECO:0007669"/>
    <property type="project" value="InterPro"/>
</dbReference>
<dbReference type="GO" id="GO:0006412">
    <property type="term" value="P:translation"/>
    <property type="evidence" value="ECO:0007669"/>
    <property type="project" value="UniProtKB-UniRule"/>
</dbReference>
<dbReference type="Gene3D" id="3.100.10.10">
    <property type="match status" value="1"/>
</dbReference>
<dbReference type="HAMAP" id="MF_01341">
    <property type="entry name" value="Ribosomal_uL15"/>
    <property type="match status" value="1"/>
</dbReference>
<dbReference type="InterPro" id="IPR030878">
    <property type="entry name" value="Ribosomal_uL15"/>
</dbReference>
<dbReference type="InterPro" id="IPR021131">
    <property type="entry name" value="Ribosomal_uL15/eL18"/>
</dbReference>
<dbReference type="InterPro" id="IPR036227">
    <property type="entry name" value="Ribosomal_uL15/eL18_sf"/>
</dbReference>
<dbReference type="InterPro" id="IPR005749">
    <property type="entry name" value="Ribosomal_uL15_bac-type"/>
</dbReference>
<dbReference type="InterPro" id="IPR001196">
    <property type="entry name" value="Ribosomal_uL15_CS"/>
</dbReference>
<dbReference type="NCBIfam" id="TIGR01071">
    <property type="entry name" value="rplO_bact"/>
    <property type="match status" value="1"/>
</dbReference>
<dbReference type="PANTHER" id="PTHR12934">
    <property type="entry name" value="50S RIBOSOMAL PROTEIN L15"/>
    <property type="match status" value="1"/>
</dbReference>
<dbReference type="PANTHER" id="PTHR12934:SF11">
    <property type="entry name" value="LARGE RIBOSOMAL SUBUNIT PROTEIN UL15M"/>
    <property type="match status" value="1"/>
</dbReference>
<dbReference type="Pfam" id="PF00828">
    <property type="entry name" value="Ribosomal_L27A"/>
    <property type="match status" value="1"/>
</dbReference>
<dbReference type="SUPFAM" id="SSF52080">
    <property type="entry name" value="Ribosomal proteins L15p and L18e"/>
    <property type="match status" value="1"/>
</dbReference>
<dbReference type="PROSITE" id="PS00475">
    <property type="entry name" value="RIBOSOMAL_L15"/>
    <property type="match status" value="1"/>
</dbReference>
<sequence>MTKLEDLRPTPGSVKPRKRVGRGIGSGHGKTSGRGHKGQKSRGSGKVHMWLEGGQTPLHRRLPKVGFKSFTHKNYAIVNIRLLEEKFSANDEITPELLLEKGFIKKIKDGVKILGSGELTKPLIVKAHAFSNSAKKAIEMVGGKVEVI</sequence>
<evidence type="ECO:0000255" key="1">
    <source>
        <dbReference type="HAMAP-Rule" id="MF_01341"/>
    </source>
</evidence>
<evidence type="ECO:0000256" key="2">
    <source>
        <dbReference type="SAM" id="MobiDB-lite"/>
    </source>
</evidence>
<evidence type="ECO:0000305" key="3"/>
<comment type="function">
    <text evidence="1">Binds to the 23S rRNA.</text>
</comment>
<comment type="subunit">
    <text evidence="1">Part of the 50S ribosomal subunit.</text>
</comment>
<comment type="similarity">
    <text evidence="1">Belongs to the universal ribosomal protein uL15 family.</text>
</comment>
<reference key="1">
    <citation type="submission" date="2007-08" db="EMBL/GenBank/DDBJ databases">
        <title>Complete sequence of Thermotoga lettingae TMO.</title>
        <authorList>
            <consortium name="US DOE Joint Genome Institute"/>
            <person name="Copeland A."/>
            <person name="Lucas S."/>
            <person name="Lapidus A."/>
            <person name="Barry K."/>
            <person name="Glavina del Rio T."/>
            <person name="Dalin E."/>
            <person name="Tice H."/>
            <person name="Pitluck S."/>
            <person name="Foster B."/>
            <person name="Bruce D."/>
            <person name="Schmutz J."/>
            <person name="Larimer F."/>
            <person name="Land M."/>
            <person name="Hauser L."/>
            <person name="Kyrpides N."/>
            <person name="Mikhailova N."/>
            <person name="Nelson K."/>
            <person name="Gogarten J.P."/>
            <person name="Noll K."/>
            <person name="Richardson P."/>
        </authorList>
    </citation>
    <scope>NUCLEOTIDE SEQUENCE [LARGE SCALE GENOMIC DNA]</scope>
    <source>
        <strain>ATCC BAA-301 / DSM 14385 / NBRC 107922 / TMO</strain>
    </source>
</reference>